<comment type="function">
    <text evidence="6">Displays low GTPase activity and exists predominantly in the GTP-bound form.</text>
</comment>
<comment type="interaction">
    <interactant intactId="EBI-11993172">
        <id>O95057</id>
    </interactant>
    <interactant intactId="EBI-80799">
        <id>Q8NI08</id>
        <label>NCOA7</label>
    </interactant>
    <organismsDiffer>false</organismsDiffer>
    <experiments>2</experiments>
</comment>
<comment type="interaction">
    <interactant intactId="EBI-11993172">
        <id>O95057</id>
    </interactant>
    <interactant intactId="EBI-1105153">
        <id>Q96KQ4</id>
        <label>PPP1R13B</label>
    </interactant>
    <organismsDiffer>false</organismsDiffer>
    <experiments>3</experiments>
</comment>
<comment type="interaction">
    <interactant intactId="EBI-11993172">
        <id>O95057</id>
    </interactant>
    <interactant intactId="EBI-12832744">
        <id>P52306-5</id>
        <label>RAP1GDS1</label>
    </interactant>
    <organismsDiffer>false</organismsDiffer>
    <experiments>5</experiments>
</comment>
<comment type="interaction">
    <interactant intactId="EBI-11993172">
        <id>O95057</id>
    </interactant>
    <interactant intactId="EBI-11952721">
        <id>Q05BL1</id>
        <label>TP53BP2</label>
    </interactant>
    <organismsDiffer>false</organismsDiffer>
    <experiments>3</experiments>
</comment>
<comment type="interaction">
    <interactant intactId="EBI-11993172">
        <id>O95057</id>
    </interactant>
    <interactant intactId="EBI-727343">
        <id>O14795</id>
        <label>UNC13B</label>
    </interactant>
    <organismsDiffer>false</organismsDiffer>
    <experiments>2</experiments>
</comment>
<comment type="subcellular location">
    <subcellularLocation>
        <location evidence="7">Cell membrane</location>
        <topology evidence="7">Lipid-anchor</topology>
        <orientation evidence="7">Cytoplasmic side</orientation>
    </subcellularLocation>
</comment>
<comment type="tissue specificity">
    <text evidence="5 6">Highly expressed in heart and brain.</text>
</comment>
<comment type="similarity">
    <text evidence="7">Belongs to the small GTPase superfamily. Di-Ras family.</text>
</comment>
<evidence type="ECO:0000250" key="1"/>
<evidence type="ECO:0000250" key="2">
    <source>
        <dbReference type="UniProtKB" id="Q96HU8"/>
    </source>
</evidence>
<evidence type="ECO:0000255" key="3"/>
<evidence type="ECO:0000256" key="4">
    <source>
        <dbReference type="SAM" id="MobiDB-lite"/>
    </source>
</evidence>
<evidence type="ECO:0000269" key="5">
    <source>
    </source>
</evidence>
<evidence type="ECO:0000269" key="6">
    <source>
    </source>
</evidence>
<evidence type="ECO:0000305" key="7"/>
<evidence type="ECO:0000305" key="8">
    <source ref="7"/>
</evidence>
<evidence type="ECO:0007744" key="9">
    <source>
        <dbReference type="PDB" id="2GF0"/>
    </source>
</evidence>
<evidence type="ECO:0007829" key="10">
    <source>
        <dbReference type="PDB" id="2GF0"/>
    </source>
</evidence>
<gene>
    <name type="primary">DIRAS1</name>
    <name type="synonym">GBTS1</name>
    <name type="synonym">RIG</name>
</gene>
<organism>
    <name type="scientific">Homo sapiens</name>
    <name type="common">Human</name>
    <dbReference type="NCBI Taxonomy" id="9606"/>
    <lineage>
        <taxon>Eukaryota</taxon>
        <taxon>Metazoa</taxon>
        <taxon>Chordata</taxon>
        <taxon>Craniata</taxon>
        <taxon>Vertebrata</taxon>
        <taxon>Euteleostomi</taxon>
        <taxon>Mammalia</taxon>
        <taxon>Eutheria</taxon>
        <taxon>Euarchontoglires</taxon>
        <taxon>Primates</taxon>
        <taxon>Haplorrhini</taxon>
        <taxon>Catarrhini</taxon>
        <taxon>Hominidae</taxon>
        <taxon>Homo</taxon>
    </lineage>
</organism>
<feature type="chain" id="PRO_0000191648" description="GTP-binding protein Di-Ras1">
    <location>
        <begin position="1"/>
        <end position="195"/>
    </location>
</feature>
<feature type="propeptide" id="PRO_0000370775" description="Removed in mature form" evidence="3">
    <location>
        <begin position="196"/>
        <end position="198"/>
    </location>
</feature>
<feature type="region of interest" description="Disordered" evidence="4">
    <location>
        <begin position="178"/>
        <end position="198"/>
    </location>
</feature>
<feature type="short sequence motif" description="Effector region" evidence="3">
    <location>
        <begin position="36"/>
        <end position="44"/>
    </location>
</feature>
<feature type="compositionally biased region" description="Basic and acidic residues" evidence="4">
    <location>
        <begin position="178"/>
        <end position="192"/>
    </location>
</feature>
<feature type="binding site" evidence="8 9">
    <location>
        <begin position="17"/>
        <end position="22"/>
    </location>
    <ligand>
        <name>GTP</name>
        <dbReference type="ChEBI" id="CHEBI:37565"/>
    </ligand>
</feature>
<feature type="binding site" evidence="2">
    <location>
        <begin position="33"/>
        <end position="39"/>
    </location>
    <ligand>
        <name>GTP</name>
        <dbReference type="ChEBI" id="CHEBI:37565"/>
    </ligand>
</feature>
<feature type="binding site" evidence="2">
    <location>
        <begin position="61"/>
        <end position="65"/>
    </location>
    <ligand>
        <name>GTP</name>
        <dbReference type="ChEBI" id="CHEBI:37565"/>
    </ligand>
</feature>
<feature type="binding site" evidence="8 9">
    <location>
        <begin position="121"/>
        <end position="125"/>
    </location>
    <ligand>
        <name>GTP</name>
        <dbReference type="ChEBI" id="CHEBI:37565"/>
    </ligand>
</feature>
<feature type="binding site" evidence="2">
    <location>
        <begin position="151"/>
        <end position="152"/>
    </location>
    <ligand>
        <name>GTP</name>
        <dbReference type="ChEBI" id="CHEBI:37565"/>
    </ligand>
</feature>
<feature type="binding site" evidence="8 9">
    <location>
        <position position="151"/>
    </location>
    <ligand>
        <name>GTP</name>
        <dbReference type="ChEBI" id="CHEBI:37565"/>
    </ligand>
</feature>
<feature type="modified residue" description="Cysteine methyl ester" evidence="3">
    <location>
        <position position="195"/>
    </location>
</feature>
<feature type="lipid moiety-binding region" description="S-geranylgeranyl cysteine" evidence="1">
    <location>
        <position position="195"/>
    </location>
</feature>
<feature type="strand" evidence="10">
    <location>
        <begin position="8"/>
        <end position="14"/>
    </location>
</feature>
<feature type="helix" evidence="10">
    <location>
        <begin position="20"/>
        <end position="29"/>
    </location>
</feature>
<feature type="strand" evidence="10">
    <location>
        <begin position="42"/>
        <end position="50"/>
    </location>
</feature>
<feature type="strand" evidence="10">
    <location>
        <begin position="53"/>
        <end position="61"/>
    </location>
</feature>
<feature type="helix" evidence="10">
    <location>
        <begin position="64"/>
        <end position="66"/>
    </location>
</feature>
<feature type="helix" evidence="10">
    <location>
        <begin position="69"/>
        <end position="78"/>
    </location>
</feature>
<feature type="strand" evidence="10">
    <location>
        <begin position="80"/>
        <end position="87"/>
    </location>
</feature>
<feature type="helix" evidence="10">
    <location>
        <begin position="91"/>
        <end position="95"/>
    </location>
</feature>
<feature type="helix" evidence="10">
    <location>
        <begin position="98"/>
        <end position="108"/>
    </location>
</feature>
<feature type="helix" evidence="10">
    <location>
        <begin position="111"/>
        <end position="113"/>
    </location>
</feature>
<feature type="strand" evidence="10">
    <location>
        <begin position="116"/>
        <end position="121"/>
    </location>
</feature>
<feature type="helix" evidence="10">
    <location>
        <begin position="132"/>
        <end position="142"/>
    </location>
</feature>
<feature type="strand" evidence="10">
    <location>
        <begin position="145"/>
        <end position="148"/>
    </location>
</feature>
<feature type="turn" evidence="10">
    <location>
        <begin position="151"/>
        <end position="154"/>
    </location>
</feature>
<feature type="helix" evidence="10">
    <location>
        <begin position="157"/>
        <end position="167"/>
    </location>
</feature>
<feature type="strand" evidence="10">
    <location>
        <begin position="169"/>
        <end position="171"/>
    </location>
</feature>
<sequence>MPEQSNDYRVVVFGAGGVGKSSLVLRFVKGTFRDTYIPTIEDTYRQVISCDKSVCTLQITDTTGSHQFPAMQRLSISKGHAFILVFSVTSKQSLEELGPIYKLIVQIKGSVEDIPVMLVGNKCDETQREVDTREAQAVAQEWKCAFMETSAKMNYNVKELFQELLTLETRRNMSLNIDGKRSGKQKRTDRVKGKCTLM</sequence>
<reference key="1">
    <citation type="journal article" date="2002" name="J. Biol. Chem.">
        <title>Di-Ras, a distinct subgroup of ras family GTPases with unique biochemical properties.</title>
        <authorList>
            <person name="Kontani K."/>
            <person name="Tada M."/>
            <person name="Ogawa T."/>
            <person name="Okai T."/>
            <person name="Saito K."/>
            <person name="Araki Y."/>
            <person name="Katada T."/>
        </authorList>
    </citation>
    <scope>NUCLEOTIDE SEQUENCE [MRNA]</scope>
    <scope>GTPASE ACTIVITY</scope>
    <scope>TISSUE SPECIFICITY</scope>
    <source>
        <tissue>Brain</tissue>
    </source>
</reference>
<reference key="2">
    <citation type="journal article" date="2002" name="Proc. Natl. Acad. Sci. U.S.A.">
        <title>Rig is a novel Ras-related protein and potential neural tumor suppressor.</title>
        <authorList>
            <person name="Ellis C.A."/>
            <person name="Vos M.D."/>
            <person name="Howell H."/>
            <person name="Vallecorsa T."/>
            <person name="Fults D.W."/>
            <person name="Clark G.J."/>
        </authorList>
    </citation>
    <scope>NUCLEOTIDE SEQUENCE [MRNA]</scope>
    <scope>TISSUE SPECIFICITY</scope>
    <source>
        <tissue>Brain</tissue>
    </source>
</reference>
<reference key="3">
    <citation type="submission" date="2001-10" db="EMBL/GenBank/DDBJ databases">
        <title>Molecular cloning of GBTS1, a novel gene encoding a small GTP-binding tumor suppressor.</title>
        <authorList>
            <person name="Gong L."/>
            <person name="Wu K."/>
        </authorList>
    </citation>
    <scope>NUCLEOTIDE SEQUENCE [MRNA]</scope>
</reference>
<reference key="4">
    <citation type="submission" date="2002-11" db="EMBL/GenBank/DDBJ databases">
        <title>cDNA clones of human proteins involved in signal transduction sequenced by the Guthrie cDNA resource center (www.cdna.org).</title>
        <authorList>
            <person name="Cismowski M.J."/>
            <person name="Kopatz S.A."/>
            <person name="Aronstam R.S."/>
            <person name="Sharma S.V."/>
        </authorList>
    </citation>
    <scope>NUCLEOTIDE SEQUENCE [LARGE SCALE MRNA]</scope>
    <source>
        <tissue>Brain</tissue>
    </source>
</reference>
<reference key="5">
    <citation type="journal article" date="2004" name="Nature">
        <title>The DNA sequence and biology of human chromosome 19.</title>
        <authorList>
            <person name="Grimwood J."/>
            <person name="Gordon L.A."/>
            <person name="Olsen A.S."/>
            <person name="Terry A."/>
            <person name="Schmutz J."/>
            <person name="Lamerdin J.E."/>
            <person name="Hellsten U."/>
            <person name="Goodstein D."/>
            <person name="Couronne O."/>
            <person name="Tran-Gyamfi M."/>
            <person name="Aerts A."/>
            <person name="Altherr M."/>
            <person name="Ashworth L."/>
            <person name="Bajorek E."/>
            <person name="Black S."/>
            <person name="Branscomb E."/>
            <person name="Caenepeel S."/>
            <person name="Carrano A.V."/>
            <person name="Caoile C."/>
            <person name="Chan Y.M."/>
            <person name="Christensen M."/>
            <person name="Cleland C.A."/>
            <person name="Copeland A."/>
            <person name="Dalin E."/>
            <person name="Dehal P."/>
            <person name="Denys M."/>
            <person name="Detter J.C."/>
            <person name="Escobar J."/>
            <person name="Flowers D."/>
            <person name="Fotopulos D."/>
            <person name="Garcia C."/>
            <person name="Georgescu A.M."/>
            <person name="Glavina T."/>
            <person name="Gomez M."/>
            <person name="Gonzales E."/>
            <person name="Groza M."/>
            <person name="Hammon N."/>
            <person name="Hawkins T."/>
            <person name="Haydu L."/>
            <person name="Ho I."/>
            <person name="Huang W."/>
            <person name="Israni S."/>
            <person name="Jett J."/>
            <person name="Kadner K."/>
            <person name="Kimball H."/>
            <person name="Kobayashi A."/>
            <person name="Larionov V."/>
            <person name="Leem S.-H."/>
            <person name="Lopez F."/>
            <person name="Lou Y."/>
            <person name="Lowry S."/>
            <person name="Malfatti S."/>
            <person name="Martinez D."/>
            <person name="McCready P.M."/>
            <person name="Medina C."/>
            <person name="Morgan J."/>
            <person name="Nelson K."/>
            <person name="Nolan M."/>
            <person name="Ovcharenko I."/>
            <person name="Pitluck S."/>
            <person name="Pollard M."/>
            <person name="Popkie A.P."/>
            <person name="Predki P."/>
            <person name="Quan G."/>
            <person name="Ramirez L."/>
            <person name="Rash S."/>
            <person name="Retterer J."/>
            <person name="Rodriguez A."/>
            <person name="Rogers S."/>
            <person name="Salamov A."/>
            <person name="Salazar A."/>
            <person name="She X."/>
            <person name="Smith D."/>
            <person name="Slezak T."/>
            <person name="Solovyev V."/>
            <person name="Thayer N."/>
            <person name="Tice H."/>
            <person name="Tsai M."/>
            <person name="Ustaszewska A."/>
            <person name="Vo N."/>
            <person name="Wagner M."/>
            <person name="Wheeler J."/>
            <person name="Wu K."/>
            <person name="Xie G."/>
            <person name="Yang J."/>
            <person name="Dubchak I."/>
            <person name="Furey T.S."/>
            <person name="DeJong P."/>
            <person name="Dickson M."/>
            <person name="Gordon D."/>
            <person name="Eichler E.E."/>
            <person name="Pennacchio L.A."/>
            <person name="Richardson P."/>
            <person name="Stubbs L."/>
            <person name="Rokhsar D.S."/>
            <person name="Myers R.M."/>
            <person name="Rubin E.M."/>
            <person name="Lucas S.M."/>
        </authorList>
    </citation>
    <scope>NUCLEOTIDE SEQUENCE [LARGE SCALE GENOMIC DNA]</scope>
</reference>
<reference key="6">
    <citation type="journal article" date="2004" name="Genome Res.">
        <title>The status, quality, and expansion of the NIH full-length cDNA project: the Mammalian Gene Collection (MGC).</title>
        <authorList>
            <consortium name="The MGC Project Team"/>
        </authorList>
    </citation>
    <scope>NUCLEOTIDE SEQUENCE [LARGE SCALE MRNA]</scope>
    <source>
        <tissue>Brain</tissue>
    </source>
</reference>
<reference key="7">
    <citation type="submission" date="2006-03" db="PDB data bank">
        <title>The crystal structure of the human DiRas1 GTPase in the inactive GDP bound state.</title>
        <authorList>
            <consortium name="Structural genomics consortium (SGC)"/>
        </authorList>
    </citation>
    <scope>X-RAY CRYSTALLOGRAPHY (1.90 ANGSTROMS) IN COMPLEX WITH GTP ANALOG</scope>
</reference>
<dbReference type="EMBL" id="AB076888">
    <property type="protein sequence ID" value="BAC01115.1"/>
    <property type="molecule type" value="mRNA"/>
</dbReference>
<dbReference type="EMBL" id="AY056037">
    <property type="protein sequence ID" value="AAL23715.1"/>
    <property type="molecule type" value="mRNA"/>
</dbReference>
<dbReference type="EMBL" id="AY059641">
    <property type="protein sequence ID" value="AAL17968.1"/>
    <property type="molecule type" value="mRNA"/>
</dbReference>
<dbReference type="EMBL" id="AY180973">
    <property type="protein sequence ID" value="AAO22153.1"/>
    <property type="molecule type" value="mRNA"/>
</dbReference>
<dbReference type="EMBL" id="AC006538">
    <property type="protein sequence ID" value="AAD13119.1"/>
    <property type="molecule type" value="Genomic_DNA"/>
</dbReference>
<dbReference type="EMBL" id="BC030660">
    <property type="protein sequence ID" value="AAH30660.1"/>
    <property type="molecule type" value="mRNA"/>
</dbReference>
<dbReference type="CCDS" id="CCDS12092.1"/>
<dbReference type="RefSeq" id="NP_660156.1">
    <property type="nucleotide sequence ID" value="NM_145173.4"/>
</dbReference>
<dbReference type="PDB" id="2GF0">
    <property type="method" value="X-ray"/>
    <property type="resolution" value="1.90 A"/>
    <property type="chains" value="A/B/C/D=1-198"/>
</dbReference>
<dbReference type="PDBsum" id="2GF0"/>
<dbReference type="SMR" id="O95057"/>
<dbReference type="BioGRID" id="127135">
    <property type="interactions" value="38"/>
</dbReference>
<dbReference type="FunCoup" id="O95057">
    <property type="interactions" value="966"/>
</dbReference>
<dbReference type="IntAct" id="O95057">
    <property type="interactions" value="23"/>
</dbReference>
<dbReference type="STRING" id="9606.ENSP00000325836"/>
<dbReference type="iPTMnet" id="O95057"/>
<dbReference type="PhosphoSitePlus" id="O95057"/>
<dbReference type="SwissPalm" id="O95057"/>
<dbReference type="BioMuta" id="DIRAS1"/>
<dbReference type="jPOST" id="O95057"/>
<dbReference type="MassIVE" id="O95057"/>
<dbReference type="PaxDb" id="9606-ENSP00000325836"/>
<dbReference type="PeptideAtlas" id="O95057"/>
<dbReference type="ProteomicsDB" id="50634"/>
<dbReference type="Pumba" id="O95057"/>
<dbReference type="Antibodypedia" id="23037">
    <property type="antibodies" value="234 antibodies from 29 providers"/>
</dbReference>
<dbReference type="DNASU" id="148252"/>
<dbReference type="Ensembl" id="ENST00000323469.5">
    <property type="protein sequence ID" value="ENSP00000325836.3"/>
    <property type="gene ID" value="ENSG00000176490.5"/>
</dbReference>
<dbReference type="Ensembl" id="ENST00000585334.1">
    <property type="protein sequence ID" value="ENSP00000468417.1"/>
    <property type="gene ID" value="ENSG00000176490.5"/>
</dbReference>
<dbReference type="GeneID" id="148252"/>
<dbReference type="KEGG" id="hsa:148252"/>
<dbReference type="MANE-Select" id="ENST00000323469.5">
    <property type="protein sequence ID" value="ENSP00000325836.3"/>
    <property type="RefSeq nucleotide sequence ID" value="NM_145173.4"/>
    <property type="RefSeq protein sequence ID" value="NP_660156.1"/>
</dbReference>
<dbReference type="UCSC" id="uc002lwf.4">
    <property type="organism name" value="human"/>
</dbReference>
<dbReference type="AGR" id="HGNC:19127"/>
<dbReference type="CTD" id="148252"/>
<dbReference type="DisGeNET" id="148252"/>
<dbReference type="GeneCards" id="DIRAS1"/>
<dbReference type="HGNC" id="HGNC:19127">
    <property type="gene designation" value="DIRAS1"/>
</dbReference>
<dbReference type="HPA" id="ENSG00000176490">
    <property type="expression patterns" value="Tissue enhanced (brain, heart muscle, tongue)"/>
</dbReference>
<dbReference type="MIM" id="607862">
    <property type="type" value="gene"/>
</dbReference>
<dbReference type="neXtProt" id="NX_O95057"/>
<dbReference type="OpenTargets" id="ENSG00000176490"/>
<dbReference type="PharmGKB" id="PA134951835"/>
<dbReference type="VEuPathDB" id="HostDB:ENSG00000176490"/>
<dbReference type="eggNOG" id="KOG0395">
    <property type="taxonomic scope" value="Eukaryota"/>
</dbReference>
<dbReference type="GeneTree" id="ENSGT00940000159915"/>
<dbReference type="HOGENOM" id="CLU_041217_9_8_1"/>
<dbReference type="InParanoid" id="O95057"/>
<dbReference type="OMA" id="LGPIYQL"/>
<dbReference type="OrthoDB" id="265044at2759"/>
<dbReference type="PAN-GO" id="O95057">
    <property type="GO annotations" value="4 GO annotations based on evolutionary models"/>
</dbReference>
<dbReference type="PhylomeDB" id="O95057"/>
<dbReference type="TreeFam" id="TF313014"/>
<dbReference type="PathwayCommons" id="O95057"/>
<dbReference type="SignaLink" id="O95057"/>
<dbReference type="BioGRID-ORCS" id="148252">
    <property type="hits" value="9 hits in 1149 CRISPR screens"/>
</dbReference>
<dbReference type="EvolutionaryTrace" id="O95057"/>
<dbReference type="GenomeRNAi" id="148252"/>
<dbReference type="Pharos" id="O95057">
    <property type="development level" value="Tbio"/>
</dbReference>
<dbReference type="PRO" id="PR:O95057"/>
<dbReference type="Proteomes" id="UP000005640">
    <property type="component" value="Chromosome 19"/>
</dbReference>
<dbReference type="RNAct" id="O95057">
    <property type="molecule type" value="protein"/>
</dbReference>
<dbReference type="Bgee" id="ENSG00000176490">
    <property type="expression patterns" value="Expressed in left ventricle myocardium and 139 other cell types or tissues"/>
</dbReference>
<dbReference type="ExpressionAtlas" id="O95057">
    <property type="expression patterns" value="baseline and differential"/>
</dbReference>
<dbReference type="GO" id="GO:0005886">
    <property type="term" value="C:plasma membrane"/>
    <property type="evidence" value="ECO:0000314"/>
    <property type="project" value="UniProtKB"/>
</dbReference>
<dbReference type="GO" id="GO:0019003">
    <property type="term" value="F:GDP binding"/>
    <property type="evidence" value="ECO:0000318"/>
    <property type="project" value="GO_Central"/>
</dbReference>
<dbReference type="GO" id="GO:0005525">
    <property type="term" value="F:GTP binding"/>
    <property type="evidence" value="ECO:0000314"/>
    <property type="project" value="UniProtKB"/>
</dbReference>
<dbReference type="GO" id="GO:0003924">
    <property type="term" value="F:GTPase activity"/>
    <property type="evidence" value="ECO:0000314"/>
    <property type="project" value="UniProtKB"/>
</dbReference>
<dbReference type="GO" id="GO:0007165">
    <property type="term" value="P:signal transduction"/>
    <property type="evidence" value="ECO:0007669"/>
    <property type="project" value="InterPro"/>
</dbReference>
<dbReference type="FunFam" id="3.40.50.300:FF:000303">
    <property type="entry name" value="GTP-binding protein Di-Ras2"/>
    <property type="match status" value="1"/>
</dbReference>
<dbReference type="Gene3D" id="3.40.50.300">
    <property type="entry name" value="P-loop containing nucleotide triphosphate hydrolases"/>
    <property type="match status" value="1"/>
</dbReference>
<dbReference type="InterPro" id="IPR027417">
    <property type="entry name" value="P-loop_NTPase"/>
</dbReference>
<dbReference type="InterPro" id="IPR005225">
    <property type="entry name" value="Small_GTP-bd"/>
</dbReference>
<dbReference type="InterPro" id="IPR001806">
    <property type="entry name" value="Small_GTPase"/>
</dbReference>
<dbReference type="InterPro" id="IPR020849">
    <property type="entry name" value="Small_GTPase_Ras-type"/>
</dbReference>
<dbReference type="NCBIfam" id="TIGR00231">
    <property type="entry name" value="small_GTP"/>
    <property type="match status" value="1"/>
</dbReference>
<dbReference type="PANTHER" id="PTHR24070">
    <property type="entry name" value="RAS, DI-RAS, AND RHEB FAMILY MEMBERS OF SMALL GTPASE SUPERFAMILY"/>
    <property type="match status" value="1"/>
</dbReference>
<dbReference type="Pfam" id="PF00071">
    <property type="entry name" value="Ras"/>
    <property type="match status" value="1"/>
</dbReference>
<dbReference type="PRINTS" id="PR00449">
    <property type="entry name" value="RASTRNSFRMNG"/>
</dbReference>
<dbReference type="SMART" id="SM00175">
    <property type="entry name" value="RAB"/>
    <property type="match status" value="1"/>
</dbReference>
<dbReference type="SMART" id="SM00173">
    <property type="entry name" value="RAS"/>
    <property type="match status" value="1"/>
</dbReference>
<dbReference type="SMART" id="SM00174">
    <property type="entry name" value="RHO"/>
    <property type="match status" value="1"/>
</dbReference>
<dbReference type="SUPFAM" id="SSF52540">
    <property type="entry name" value="P-loop containing nucleoside triphosphate hydrolases"/>
    <property type="match status" value="1"/>
</dbReference>
<dbReference type="PROSITE" id="PS51421">
    <property type="entry name" value="RAS"/>
    <property type="match status" value="1"/>
</dbReference>
<protein>
    <recommendedName>
        <fullName>GTP-binding protein Di-Ras1</fullName>
    </recommendedName>
    <alternativeName>
        <fullName>Distinct subgroup of the Ras family member 1</fullName>
    </alternativeName>
    <alternativeName>
        <fullName>Ras-related inhibitor of cell growth</fullName>
        <shortName>Rig</shortName>
    </alternativeName>
    <alternativeName>
        <fullName>Small GTP-binding tumor suppressor 1</fullName>
    </alternativeName>
</protein>
<keyword id="KW-0002">3D-structure</keyword>
<keyword id="KW-1003">Cell membrane</keyword>
<keyword id="KW-0342">GTP-binding</keyword>
<keyword id="KW-0449">Lipoprotein</keyword>
<keyword id="KW-0472">Membrane</keyword>
<keyword id="KW-0488">Methylation</keyword>
<keyword id="KW-0547">Nucleotide-binding</keyword>
<keyword id="KW-0636">Prenylation</keyword>
<keyword id="KW-1267">Proteomics identification</keyword>
<keyword id="KW-1185">Reference proteome</keyword>
<name>DIRA1_HUMAN</name>
<accession>O95057</accession>
<proteinExistence type="evidence at protein level"/>